<name>VKTG1_CYRHA</name>
<comment type="function">
    <text evidence="2">Serine protease inhibitor that inhibits trypsin at a molar ratio of 1:1.</text>
</comment>
<comment type="subcellular location">
    <subcellularLocation>
        <location evidence="6">Secreted</location>
    </subcellularLocation>
</comment>
<comment type="tissue specificity">
    <text evidence="6">Expressed by the venom gland.</text>
</comment>
<comment type="similarity">
    <text evidence="5">Belongs to the venom Kunitz-type family. 03 (sub-Kunitz) subfamily.</text>
</comment>
<dbReference type="EMBL" id="GU293035">
    <property type="protein sequence ID" value="ADB56851.1"/>
    <property type="molecule type" value="mRNA"/>
</dbReference>
<dbReference type="SMR" id="D2Y2F8"/>
<dbReference type="ArachnoServer" id="AS002017">
    <property type="toxin name" value="U15-theraphotoxin-Hhn1g"/>
</dbReference>
<dbReference type="GO" id="GO:0005576">
    <property type="term" value="C:extracellular region"/>
    <property type="evidence" value="ECO:0007669"/>
    <property type="project" value="UniProtKB-SubCell"/>
</dbReference>
<dbReference type="GO" id="GO:0015459">
    <property type="term" value="F:potassium channel regulator activity"/>
    <property type="evidence" value="ECO:0007669"/>
    <property type="project" value="UniProtKB-KW"/>
</dbReference>
<dbReference type="GO" id="GO:0004867">
    <property type="term" value="F:serine-type endopeptidase inhibitor activity"/>
    <property type="evidence" value="ECO:0007669"/>
    <property type="project" value="UniProtKB-KW"/>
</dbReference>
<dbReference type="GO" id="GO:0090729">
    <property type="term" value="F:toxin activity"/>
    <property type="evidence" value="ECO:0007669"/>
    <property type="project" value="UniProtKB-KW"/>
</dbReference>
<dbReference type="GO" id="GO:0044562">
    <property type="term" value="P:envenomation resulting in negative regulation of voltage-gated potassium channel activity in another organism"/>
    <property type="evidence" value="ECO:0007669"/>
    <property type="project" value="UniProtKB-ARBA"/>
</dbReference>
<dbReference type="CDD" id="cd22598">
    <property type="entry name" value="Kunitz_huwentoxin"/>
    <property type="match status" value="1"/>
</dbReference>
<dbReference type="FunFam" id="4.10.410.10:FF:000020">
    <property type="entry name" value="Collagen, type VI, alpha 3"/>
    <property type="match status" value="1"/>
</dbReference>
<dbReference type="Gene3D" id="4.10.410.10">
    <property type="entry name" value="Pancreatic trypsin inhibitor Kunitz domain"/>
    <property type="match status" value="1"/>
</dbReference>
<dbReference type="InterPro" id="IPR002223">
    <property type="entry name" value="Kunitz_BPTI"/>
</dbReference>
<dbReference type="InterPro" id="IPR036880">
    <property type="entry name" value="Kunitz_BPTI_sf"/>
</dbReference>
<dbReference type="InterPro" id="IPR051388">
    <property type="entry name" value="Serpin_venom_toxin"/>
</dbReference>
<dbReference type="PANTHER" id="PTHR46751">
    <property type="entry name" value="EPPIN"/>
    <property type="match status" value="1"/>
</dbReference>
<dbReference type="PANTHER" id="PTHR46751:SF1">
    <property type="entry name" value="WAP FOUR-DISULFIDE CORE DOMAIN PROTEIN 6A"/>
    <property type="match status" value="1"/>
</dbReference>
<dbReference type="Pfam" id="PF00014">
    <property type="entry name" value="Kunitz_BPTI"/>
    <property type="match status" value="1"/>
</dbReference>
<dbReference type="PRINTS" id="PR00759">
    <property type="entry name" value="BASICPTASE"/>
</dbReference>
<dbReference type="SMART" id="SM00131">
    <property type="entry name" value="KU"/>
    <property type="match status" value="1"/>
</dbReference>
<dbReference type="SUPFAM" id="SSF57362">
    <property type="entry name" value="BPTI-like"/>
    <property type="match status" value="1"/>
</dbReference>
<dbReference type="PROSITE" id="PS50279">
    <property type="entry name" value="BPTI_KUNITZ_2"/>
    <property type="match status" value="1"/>
</dbReference>
<accession>D2Y2F8</accession>
<protein>
    <recommendedName>
        <fullName>Kunitz-type U15-theraphotoxin-Hhn1g</fullName>
        <shortName>U15-TRTX-Hhn1g</shortName>
    </recommendedName>
    <alternativeName>
        <fullName>Kunitz-type serine protease inhibitor hainantoxin-XI-7</fullName>
        <shortName>HNTX-XI-7</shortName>
    </alternativeName>
</protein>
<feature type="signal peptide" evidence="3">
    <location>
        <begin position="1"/>
        <end position="27"/>
    </location>
</feature>
<feature type="propeptide" id="PRO_0000400990" evidence="1">
    <location>
        <begin position="28"/>
        <end position="33"/>
    </location>
</feature>
<feature type="peptide" id="PRO_0000400991" description="Kunitz-type U15-theraphotoxin-Hhn1g">
    <location>
        <begin position="34"/>
        <end position="88"/>
    </location>
</feature>
<feature type="domain" description="BPTI/Kunitz inhibitor" evidence="4">
    <location>
        <begin position="37"/>
        <end position="85"/>
    </location>
</feature>
<feature type="site" description="Reactive bond for chymotrypsin" evidence="1">
    <location>
        <begin position="47"/>
        <end position="48"/>
    </location>
</feature>
<feature type="disulfide bond" evidence="4">
    <location>
        <begin position="37"/>
        <end position="85"/>
    </location>
</feature>
<feature type="disulfide bond" evidence="4">
    <location>
        <begin position="60"/>
        <end position="81"/>
    </location>
</feature>
<evidence type="ECO:0000250" key="1"/>
<evidence type="ECO:0000250" key="2">
    <source>
        <dbReference type="UniProtKB" id="P68425"/>
    </source>
</evidence>
<evidence type="ECO:0000255" key="3"/>
<evidence type="ECO:0000255" key="4">
    <source>
        <dbReference type="PROSITE-ProRule" id="PRU00031"/>
    </source>
</evidence>
<evidence type="ECO:0000305" key="5"/>
<evidence type="ECO:0000305" key="6">
    <source>
    </source>
</evidence>
<sequence length="88" mass="9861">MGTARFLRAVLLLSVLLMVTFPALLSAEHHDGRVDICRLPSDSGDCLRFFEMWYFDGTACTKFVYGGYGGNDNRFPTEKACMKRCAKA</sequence>
<keyword id="KW-1015">Disulfide bond</keyword>
<keyword id="KW-0646">Protease inhibitor</keyword>
<keyword id="KW-0964">Secreted</keyword>
<keyword id="KW-0722">Serine protease inhibitor</keyword>
<keyword id="KW-0732">Signal</keyword>
<organism>
    <name type="scientific">Cyriopagopus hainanus</name>
    <name type="common">Chinese bird spider</name>
    <name type="synonym">Haplopelma hainanum</name>
    <dbReference type="NCBI Taxonomy" id="209901"/>
    <lineage>
        <taxon>Eukaryota</taxon>
        <taxon>Metazoa</taxon>
        <taxon>Ecdysozoa</taxon>
        <taxon>Arthropoda</taxon>
        <taxon>Chelicerata</taxon>
        <taxon>Arachnida</taxon>
        <taxon>Araneae</taxon>
        <taxon>Mygalomorphae</taxon>
        <taxon>Theraphosidae</taxon>
        <taxon>Haplopelma</taxon>
    </lineage>
</organism>
<proteinExistence type="inferred from homology"/>
<reference key="1">
    <citation type="journal article" date="2010" name="J. Proteome Res.">
        <title>Molecular diversification of peptide toxins from the tarantula Haplopelma hainanum (Ornithoctonus hainana) venom based on transcriptomic, peptidomic, and genomic analyses.</title>
        <authorList>
            <person name="Tang X."/>
            <person name="Zhang Y."/>
            <person name="Hu W."/>
            <person name="Xu D."/>
            <person name="Tao H."/>
            <person name="Yang X."/>
            <person name="Li Y."/>
            <person name="Jiang L."/>
            <person name="Liang S."/>
        </authorList>
    </citation>
    <scope>NUCLEOTIDE SEQUENCE [LARGE SCALE MRNA]</scope>
    <source>
        <tissue>Venom gland</tissue>
    </source>
</reference>